<protein>
    <recommendedName>
        <fullName>Serine/threonine-protein kinase BUR1</fullName>
        <ecNumber>2.7.11.22</ecNumber>
        <ecNumber>2.7.11.23</ecNumber>
    </recommendedName>
</protein>
<organism>
    <name type="scientific">Kluyveromyces lactis (strain ATCC 8585 / CBS 2359 / DSM 70799 / NBRC 1267 / NRRL Y-1140 / WM37)</name>
    <name type="common">Yeast</name>
    <name type="synonym">Candida sphaerica</name>
    <dbReference type="NCBI Taxonomy" id="284590"/>
    <lineage>
        <taxon>Eukaryota</taxon>
        <taxon>Fungi</taxon>
        <taxon>Dikarya</taxon>
        <taxon>Ascomycota</taxon>
        <taxon>Saccharomycotina</taxon>
        <taxon>Saccharomycetes</taxon>
        <taxon>Saccharomycetales</taxon>
        <taxon>Saccharomycetaceae</taxon>
        <taxon>Kluyveromyces</taxon>
    </lineage>
</organism>
<sequence length="645" mass="72214">MSTVNKKPASLKYKIGKVKQIPTVVKDDKTGLEYIQVQSRENEKVYGVTKFLNNYREEEKLGQGTFGEVFKGIHLGTNRKVAIKRILVRAEKDLFPITAQREITILKRMNHKNIVKLIEIVYDESPTPKTDSTSPRPVGNYHGNNTANQQKLITGKHFFMILPYMVSDLTGLLHNPRVEFGMADVKNIMLQLLEGINYIHCNKFLHRDIKTANILIDHKGVVKIADFGLARNYYGSPPNLKYPGGAGSGAKYTSVVVTRWYRAPEIVLGDRHYTTAVDIWGIGCVFAEFFEKKPILQGQTDIDQGHVIFKLMGTPSMDEWGLAYHLPGSELTKTNYKSTLQERFSKALNETGLDLLSKLLALDPYKRVTAMKAKKHPFFFEEPLPNAQLTLPNEECHESDIKRYKSEMNESMSQRPPSAPTGHTSTDNSIRAVTGAAFPKEASIPKAPRPEHIKSTIPAQPSASRYNGAATQNIPKEPIPTAPLPKGPKNSIPTGPNKLPPNPRDSYASKYPAESRFGVNTRITTESYNAGKRYRNRGGWETGRDSLNYNNNYAPPADRSHHPTIQRPSAPRGGSYPNRYQNQDYNTSRNTGYNQYSQAGDRRSYRPGASENPGTIGHGSSQSTQKDSKSSHSNNVKPKDVADYY</sequence>
<evidence type="ECO:0000250" key="1"/>
<evidence type="ECO:0000255" key="2">
    <source>
        <dbReference type="PROSITE-ProRule" id="PRU00159"/>
    </source>
</evidence>
<evidence type="ECO:0000255" key="3">
    <source>
        <dbReference type="PROSITE-ProRule" id="PRU10027"/>
    </source>
</evidence>
<evidence type="ECO:0000256" key="4">
    <source>
        <dbReference type="SAM" id="MobiDB-lite"/>
    </source>
</evidence>
<evidence type="ECO:0000305" key="5"/>
<feature type="chain" id="PRO_0000085684" description="Serine/threonine-protein kinase BUR1">
    <location>
        <begin position="1"/>
        <end position="645"/>
    </location>
</feature>
<feature type="domain" description="Protein kinase" evidence="2">
    <location>
        <begin position="55"/>
        <end position="379"/>
    </location>
</feature>
<feature type="region of interest" description="Disordered" evidence="4">
    <location>
        <begin position="407"/>
        <end position="428"/>
    </location>
</feature>
<feature type="region of interest" description="Disordered" evidence="4">
    <location>
        <begin position="442"/>
        <end position="513"/>
    </location>
</feature>
<feature type="region of interest" description="Disordered" evidence="4">
    <location>
        <begin position="533"/>
        <end position="645"/>
    </location>
</feature>
<feature type="compositionally biased region" description="Polar residues" evidence="4">
    <location>
        <begin position="409"/>
        <end position="428"/>
    </location>
</feature>
<feature type="compositionally biased region" description="Polar residues" evidence="4">
    <location>
        <begin position="457"/>
        <end position="474"/>
    </location>
</feature>
<feature type="compositionally biased region" description="Pro residues" evidence="4">
    <location>
        <begin position="477"/>
        <end position="486"/>
    </location>
</feature>
<feature type="compositionally biased region" description="Polar residues" evidence="4">
    <location>
        <begin position="578"/>
        <end position="598"/>
    </location>
</feature>
<feature type="active site" description="Proton acceptor" evidence="2 3">
    <location>
        <position position="208"/>
    </location>
</feature>
<feature type="binding site" evidence="2">
    <location>
        <begin position="61"/>
        <end position="69"/>
    </location>
    <ligand>
        <name>ATP</name>
        <dbReference type="ChEBI" id="CHEBI:30616"/>
    </ligand>
</feature>
<feature type="binding site" evidence="2">
    <location>
        <position position="84"/>
    </location>
    <ligand>
        <name>ATP</name>
        <dbReference type="ChEBI" id="CHEBI:30616"/>
    </ligand>
</feature>
<dbReference type="EC" id="2.7.11.22"/>
<dbReference type="EC" id="2.7.11.23"/>
<dbReference type="EMBL" id="CR382124">
    <property type="protein sequence ID" value="CAH00626.1"/>
    <property type="molecule type" value="Genomic_DNA"/>
</dbReference>
<dbReference type="RefSeq" id="XP_453530.1">
    <property type="nucleotide sequence ID" value="XM_453530.1"/>
</dbReference>
<dbReference type="SMR" id="Q6CRA9"/>
<dbReference type="FunCoup" id="Q6CRA9">
    <property type="interactions" value="320"/>
</dbReference>
<dbReference type="STRING" id="284590.Q6CRA9"/>
<dbReference type="PaxDb" id="284590-Q6CRA9"/>
<dbReference type="KEGG" id="kla:KLLA0_D10527g"/>
<dbReference type="eggNOG" id="KOG0600">
    <property type="taxonomic scope" value="Eukaryota"/>
</dbReference>
<dbReference type="HOGENOM" id="CLU_000288_167_0_1"/>
<dbReference type="InParanoid" id="Q6CRA9"/>
<dbReference type="OMA" id="EYDENPR"/>
<dbReference type="Proteomes" id="UP000000598">
    <property type="component" value="Chromosome D"/>
</dbReference>
<dbReference type="GO" id="GO:0005634">
    <property type="term" value="C:nucleus"/>
    <property type="evidence" value="ECO:0007669"/>
    <property type="project" value="UniProtKB-SubCell"/>
</dbReference>
<dbReference type="GO" id="GO:1902554">
    <property type="term" value="C:serine/threonine protein kinase complex"/>
    <property type="evidence" value="ECO:0007669"/>
    <property type="project" value="UniProtKB-ARBA"/>
</dbReference>
<dbReference type="GO" id="GO:0005524">
    <property type="term" value="F:ATP binding"/>
    <property type="evidence" value="ECO:0007669"/>
    <property type="project" value="UniProtKB-KW"/>
</dbReference>
<dbReference type="GO" id="GO:0004693">
    <property type="term" value="F:cyclin-dependent protein serine/threonine kinase activity"/>
    <property type="evidence" value="ECO:0007669"/>
    <property type="project" value="UniProtKB-EC"/>
</dbReference>
<dbReference type="GO" id="GO:0106310">
    <property type="term" value="F:protein serine kinase activity"/>
    <property type="evidence" value="ECO:0007669"/>
    <property type="project" value="RHEA"/>
</dbReference>
<dbReference type="GO" id="GO:0008353">
    <property type="term" value="F:RNA polymerase II CTD heptapeptide repeat kinase activity"/>
    <property type="evidence" value="ECO:0007669"/>
    <property type="project" value="UniProtKB-EC"/>
</dbReference>
<dbReference type="GO" id="GO:0009891">
    <property type="term" value="P:positive regulation of biosynthetic process"/>
    <property type="evidence" value="ECO:0007669"/>
    <property type="project" value="UniProtKB-ARBA"/>
</dbReference>
<dbReference type="FunFam" id="1.10.510.10:FF:000624">
    <property type="entry name" value="Mitogen-activated protein kinase"/>
    <property type="match status" value="1"/>
</dbReference>
<dbReference type="Gene3D" id="3.30.200.20">
    <property type="entry name" value="Phosphorylase Kinase, domain 1"/>
    <property type="match status" value="1"/>
</dbReference>
<dbReference type="Gene3D" id="1.10.510.10">
    <property type="entry name" value="Transferase(Phosphotransferase) domain 1"/>
    <property type="match status" value="1"/>
</dbReference>
<dbReference type="InterPro" id="IPR050108">
    <property type="entry name" value="CDK"/>
</dbReference>
<dbReference type="InterPro" id="IPR011009">
    <property type="entry name" value="Kinase-like_dom_sf"/>
</dbReference>
<dbReference type="InterPro" id="IPR000719">
    <property type="entry name" value="Prot_kinase_dom"/>
</dbReference>
<dbReference type="InterPro" id="IPR017441">
    <property type="entry name" value="Protein_kinase_ATP_BS"/>
</dbReference>
<dbReference type="InterPro" id="IPR008271">
    <property type="entry name" value="Ser/Thr_kinase_AS"/>
</dbReference>
<dbReference type="PANTHER" id="PTHR24056">
    <property type="entry name" value="CELL DIVISION PROTEIN KINASE"/>
    <property type="match status" value="1"/>
</dbReference>
<dbReference type="PANTHER" id="PTHR24056:SF233">
    <property type="entry name" value="CYCLIN-DEPENDENT KINASE 9"/>
    <property type="match status" value="1"/>
</dbReference>
<dbReference type="Pfam" id="PF00069">
    <property type="entry name" value="Pkinase"/>
    <property type="match status" value="1"/>
</dbReference>
<dbReference type="SMART" id="SM00220">
    <property type="entry name" value="S_TKc"/>
    <property type="match status" value="1"/>
</dbReference>
<dbReference type="SUPFAM" id="SSF56112">
    <property type="entry name" value="Protein kinase-like (PK-like)"/>
    <property type="match status" value="1"/>
</dbReference>
<dbReference type="PROSITE" id="PS00107">
    <property type="entry name" value="PROTEIN_KINASE_ATP"/>
    <property type="match status" value="1"/>
</dbReference>
<dbReference type="PROSITE" id="PS50011">
    <property type="entry name" value="PROTEIN_KINASE_DOM"/>
    <property type="match status" value="1"/>
</dbReference>
<dbReference type="PROSITE" id="PS00108">
    <property type="entry name" value="PROTEIN_KINASE_ST"/>
    <property type="match status" value="1"/>
</dbReference>
<proteinExistence type="inferred from homology"/>
<gene>
    <name type="primary">BUR1</name>
    <name type="ordered locus">KLLA0D10527g</name>
</gene>
<comment type="function">
    <text evidence="1">Serine/threonine-protein kinase involved in transcription regulation. Phosphorylates the UBC2/RAD6 ubiquitin-conjugating enzyme (E2), leading to monoubiquitination of histone H2B and the silencing of telomeric-associated genes. Also required for histone H3 methylation. Necessary for the recovery from pheromone-induced growth arrest in the cell cycle G1 phase (By similarity).</text>
</comment>
<comment type="catalytic activity">
    <reaction>
        <text>L-seryl-[protein] + ATP = O-phospho-L-seryl-[protein] + ADP + H(+)</text>
        <dbReference type="Rhea" id="RHEA:17989"/>
        <dbReference type="Rhea" id="RHEA-COMP:9863"/>
        <dbReference type="Rhea" id="RHEA-COMP:11604"/>
        <dbReference type="ChEBI" id="CHEBI:15378"/>
        <dbReference type="ChEBI" id="CHEBI:29999"/>
        <dbReference type="ChEBI" id="CHEBI:30616"/>
        <dbReference type="ChEBI" id="CHEBI:83421"/>
        <dbReference type="ChEBI" id="CHEBI:456216"/>
        <dbReference type="EC" id="2.7.11.22"/>
    </reaction>
</comment>
<comment type="catalytic activity">
    <reaction>
        <text>L-threonyl-[protein] + ATP = O-phospho-L-threonyl-[protein] + ADP + H(+)</text>
        <dbReference type="Rhea" id="RHEA:46608"/>
        <dbReference type="Rhea" id="RHEA-COMP:11060"/>
        <dbReference type="Rhea" id="RHEA-COMP:11605"/>
        <dbReference type="ChEBI" id="CHEBI:15378"/>
        <dbReference type="ChEBI" id="CHEBI:30013"/>
        <dbReference type="ChEBI" id="CHEBI:30616"/>
        <dbReference type="ChEBI" id="CHEBI:61977"/>
        <dbReference type="ChEBI" id="CHEBI:456216"/>
        <dbReference type="EC" id="2.7.11.22"/>
    </reaction>
</comment>
<comment type="catalytic activity">
    <reaction>
        <text>[DNA-directed RNA polymerase] + ATP = phospho-[DNA-directed RNA polymerase] + ADP + H(+)</text>
        <dbReference type="Rhea" id="RHEA:10216"/>
        <dbReference type="Rhea" id="RHEA-COMP:11321"/>
        <dbReference type="Rhea" id="RHEA-COMP:11322"/>
        <dbReference type="ChEBI" id="CHEBI:15378"/>
        <dbReference type="ChEBI" id="CHEBI:30616"/>
        <dbReference type="ChEBI" id="CHEBI:43176"/>
        <dbReference type="ChEBI" id="CHEBI:68546"/>
        <dbReference type="ChEBI" id="CHEBI:456216"/>
        <dbReference type="EC" id="2.7.11.23"/>
    </reaction>
</comment>
<comment type="subcellular location">
    <subcellularLocation>
        <location evidence="1">Nucleus</location>
    </subcellularLocation>
</comment>
<comment type="similarity">
    <text evidence="5">Belongs to the protein kinase superfamily. CMGC Ser/Thr protein kinase family. CDC2/CDKX subfamily.</text>
</comment>
<keyword id="KW-0067">ATP-binding</keyword>
<keyword id="KW-0418">Kinase</keyword>
<keyword id="KW-0547">Nucleotide-binding</keyword>
<keyword id="KW-0539">Nucleus</keyword>
<keyword id="KW-1185">Reference proteome</keyword>
<keyword id="KW-0723">Serine/threonine-protein kinase</keyword>
<keyword id="KW-0808">Transferase</keyword>
<accession>Q6CRA9</accession>
<name>BUR1_KLULA</name>
<reference key="1">
    <citation type="journal article" date="2004" name="Nature">
        <title>Genome evolution in yeasts.</title>
        <authorList>
            <person name="Dujon B."/>
            <person name="Sherman D."/>
            <person name="Fischer G."/>
            <person name="Durrens P."/>
            <person name="Casaregola S."/>
            <person name="Lafontaine I."/>
            <person name="de Montigny J."/>
            <person name="Marck C."/>
            <person name="Neuveglise C."/>
            <person name="Talla E."/>
            <person name="Goffard N."/>
            <person name="Frangeul L."/>
            <person name="Aigle M."/>
            <person name="Anthouard V."/>
            <person name="Babour A."/>
            <person name="Barbe V."/>
            <person name="Barnay S."/>
            <person name="Blanchin S."/>
            <person name="Beckerich J.-M."/>
            <person name="Beyne E."/>
            <person name="Bleykasten C."/>
            <person name="Boisrame A."/>
            <person name="Boyer J."/>
            <person name="Cattolico L."/>
            <person name="Confanioleri F."/>
            <person name="de Daruvar A."/>
            <person name="Despons L."/>
            <person name="Fabre E."/>
            <person name="Fairhead C."/>
            <person name="Ferry-Dumazet H."/>
            <person name="Groppi A."/>
            <person name="Hantraye F."/>
            <person name="Hennequin C."/>
            <person name="Jauniaux N."/>
            <person name="Joyet P."/>
            <person name="Kachouri R."/>
            <person name="Kerrest A."/>
            <person name="Koszul R."/>
            <person name="Lemaire M."/>
            <person name="Lesur I."/>
            <person name="Ma L."/>
            <person name="Muller H."/>
            <person name="Nicaud J.-M."/>
            <person name="Nikolski M."/>
            <person name="Oztas S."/>
            <person name="Ozier-Kalogeropoulos O."/>
            <person name="Pellenz S."/>
            <person name="Potier S."/>
            <person name="Richard G.-F."/>
            <person name="Straub M.-L."/>
            <person name="Suleau A."/>
            <person name="Swennen D."/>
            <person name="Tekaia F."/>
            <person name="Wesolowski-Louvel M."/>
            <person name="Westhof E."/>
            <person name="Wirth B."/>
            <person name="Zeniou-Meyer M."/>
            <person name="Zivanovic Y."/>
            <person name="Bolotin-Fukuhara M."/>
            <person name="Thierry A."/>
            <person name="Bouchier C."/>
            <person name="Caudron B."/>
            <person name="Scarpelli C."/>
            <person name="Gaillardin C."/>
            <person name="Weissenbach J."/>
            <person name="Wincker P."/>
            <person name="Souciet J.-L."/>
        </authorList>
    </citation>
    <scope>NUCLEOTIDE SEQUENCE [LARGE SCALE GENOMIC DNA]</scope>
    <source>
        <strain>ATCC 8585 / CBS 2359 / DSM 70799 / NBRC 1267 / NRRL Y-1140 / WM37</strain>
    </source>
</reference>